<name>RL2_CHLTA</name>
<feature type="chain" id="PRO_0000237171" description="Large ribosomal subunit protein uL2">
    <location>
        <begin position="1"/>
        <end position="284"/>
    </location>
</feature>
<feature type="region of interest" description="Disordered" evidence="2">
    <location>
        <begin position="28"/>
        <end position="50"/>
    </location>
</feature>
<feature type="region of interest" description="Disordered" evidence="2">
    <location>
        <begin position="232"/>
        <end position="284"/>
    </location>
</feature>
<feature type="compositionally biased region" description="Basic residues" evidence="2">
    <location>
        <begin position="36"/>
        <end position="46"/>
    </location>
</feature>
<feature type="compositionally biased region" description="Basic and acidic residues" evidence="2">
    <location>
        <begin position="240"/>
        <end position="250"/>
    </location>
</feature>
<feature type="compositionally biased region" description="Basic residues" evidence="2">
    <location>
        <begin position="264"/>
        <end position="284"/>
    </location>
</feature>
<keyword id="KW-0687">Ribonucleoprotein</keyword>
<keyword id="KW-0689">Ribosomal protein</keyword>
<keyword id="KW-0694">RNA-binding</keyword>
<keyword id="KW-0699">rRNA-binding</keyword>
<dbReference type="EMBL" id="CP000051">
    <property type="protein sequence ID" value="AAX50800.1"/>
    <property type="molecule type" value="Genomic_DNA"/>
</dbReference>
<dbReference type="RefSeq" id="WP_009871889.1">
    <property type="nucleotide sequence ID" value="NC_007429.1"/>
</dbReference>
<dbReference type="SMR" id="Q3KLH2"/>
<dbReference type="KEGG" id="cta:CTA_0574"/>
<dbReference type="HOGENOM" id="CLU_036235_2_1_0"/>
<dbReference type="Proteomes" id="UP000002532">
    <property type="component" value="Chromosome"/>
</dbReference>
<dbReference type="GO" id="GO:0015934">
    <property type="term" value="C:large ribosomal subunit"/>
    <property type="evidence" value="ECO:0007669"/>
    <property type="project" value="InterPro"/>
</dbReference>
<dbReference type="GO" id="GO:0019843">
    <property type="term" value="F:rRNA binding"/>
    <property type="evidence" value="ECO:0007669"/>
    <property type="project" value="UniProtKB-UniRule"/>
</dbReference>
<dbReference type="GO" id="GO:0003735">
    <property type="term" value="F:structural constituent of ribosome"/>
    <property type="evidence" value="ECO:0007669"/>
    <property type="project" value="InterPro"/>
</dbReference>
<dbReference type="GO" id="GO:0016740">
    <property type="term" value="F:transferase activity"/>
    <property type="evidence" value="ECO:0007669"/>
    <property type="project" value="InterPro"/>
</dbReference>
<dbReference type="GO" id="GO:0002181">
    <property type="term" value="P:cytoplasmic translation"/>
    <property type="evidence" value="ECO:0007669"/>
    <property type="project" value="TreeGrafter"/>
</dbReference>
<dbReference type="FunFam" id="2.30.30.30:FF:000001">
    <property type="entry name" value="50S ribosomal protein L2"/>
    <property type="match status" value="1"/>
</dbReference>
<dbReference type="FunFam" id="2.40.50.140:FF:000003">
    <property type="entry name" value="50S ribosomal protein L2"/>
    <property type="match status" value="1"/>
</dbReference>
<dbReference type="FunFam" id="4.10.950.10:FF:000001">
    <property type="entry name" value="50S ribosomal protein L2"/>
    <property type="match status" value="1"/>
</dbReference>
<dbReference type="Gene3D" id="2.30.30.30">
    <property type="match status" value="1"/>
</dbReference>
<dbReference type="Gene3D" id="2.40.50.140">
    <property type="entry name" value="Nucleic acid-binding proteins"/>
    <property type="match status" value="1"/>
</dbReference>
<dbReference type="Gene3D" id="4.10.950.10">
    <property type="entry name" value="Ribosomal protein L2, domain 3"/>
    <property type="match status" value="1"/>
</dbReference>
<dbReference type="HAMAP" id="MF_01320_B">
    <property type="entry name" value="Ribosomal_uL2_B"/>
    <property type="match status" value="1"/>
</dbReference>
<dbReference type="InterPro" id="IPR012340">
    <property type="entry name" value="NA-bd_OB-fold"/>
</dbReference>
<dbReference type="InterPro" id="IPR014722">
    <property type="entry name" value="Rib_uL2_dom2"/>
</dbReference>
<dbReference type="InterPro" id="IPR002171">
    <property type="entry name" value="Ribosomal_uL2"/>
</dbReference>
<dbReference type="InterPro" id="IPR005880">
    <property type="entry name" value="Ribosomal_uL2_bac/org-type"/>
</dbReference>
<dbReference type="InterPro" id="IPR022669">
    <property type="entry name" value="Ribosomal_uL2_C"/>
</dbReference>
<dbReference type="InterPro" id="IPR022671">
    <property type="entry name" value="Ribosomal_uL2_CS"/>
</dbReference>
<dbReference type="InterPro" id="IPR014726">
    <property type="entry name" value="Ribosomal_uL2_dom3"/>
</dbReference>
<dbReference type="InterPro" id="IPR022666">
    <property type="entry name" value="Ribosomal_uL2_RNA-bd_dom"/>
</dbReference>
<dbReference type="InterPro" id="IPR008991">
    <property type="entry name" value="Translation_prot_SH3-like_sf"/>
</dbReference>
<dbReference type="NCBIfam" id="TIGR01171">
    <property type="entry name" value="rplB_bact"/>
    <property type="match status" value="1"/>
</dbReference>
<dbReference type="PANTHER" id="PTHR13691:SF5">
    <property type="entry name" value="LARGE RIBOSOMAL SUBUNIT PROTEIN UL2M"/>
    <property type="match status" value="1"/>
</dbReference>
<dbReference type="PANTHER" id="PTHR13691">
    <property type="entry name" value="RIBOSOMAL PROTEIN L2"/>
    <property type="match status" value="1"/>
</dbReference>
<dbReference type="Pfam" id="PF00181">
    <property type="entry name" value="Ribosomal_L2"/>
    <property type="match status" value="1"/>
</dbReference>
<dbReference type="Pfam" id="PF03947">
    <property type="entry name" value="Ribosomal_L2_C"/>
    <property type="match status" value="1"/>
</dbReference>
<dbReference type="PIRSF" id="PIRSF002158">
    <property type="entry name" value="Ribosomal_L2"/>
    <property type="match status" value="1"/>
</dbReference>
<dbReference type="SMART" id="SM01383">
    <property type="entry name" value="Ribosomal_L2"/>
    <property type="match status" value="1"/>
</dbReference>
<dbReference type="SMART" id="SM01382">
    <property type="entry name" value="Ribosomal_L2_C"/>
    <property type="match status" value="1"/>
</dbReference>
<dbReference type="SUPFAM" id="SSF50249">
    <property type="entry name" value="Nucleic acid-binding proteins"/>
    <property type="match status" value="1"/>
</dbReference>
<dbReference type="SUPFAM" id="SSF50104">
    <property type="entry name" value="Translation proteins SH3-like domain"/>
    <property type="match status" value="1"/>
</dbReference>
<dbReference type="PROSITE" id="PS00467">
    <property type="entry name" value="RIBOSOMAL_L2"/>
    <property type="match status" value="1"/>
</dbReference>
<evidence type="ECO:0000255" key="1">
    <source>
        <dbReference type="HAMAP-Rule" id="MF_01320"/>
    </source>
</evidence>
<evidence type="ECO:0000256" key="2">
    <source>
        <dbReference type="SAM" id="MobiDB-lite"/>
    </source>
</evidence>
<evidence type="ECO:0000305" key="3"/>
<proteinExistence type="inferred from homology"/>
<organism>
    <name type="scientific">Chlamydia trachomatis serovar A (strain ATCC VR-571B / DSM 19440 / HAR-13)</name>
    <dbReference type="NCBI Taxonomy" id="315277"/>
    <lineage>
        <taxon>Bacteria</taxon>
        <taxon>Pseudomonadati</taxon>
        <taxon>Chlamydiota</taxon>
        <taxon>Chlamydiia</taxon>
        <taxon>Chlamydiales</taxon>
        <taxon>Chlamydiaceae</taxon>
        <taxon>Chlamydia/Chlamydophila group</taxon>
        <taxon>Chlamydia</taxon>
    </lineage>
</organism>
<gene>
    <name evidence="1" type="primary">rplB</name>
    <name type="ordered locus">CTA_0574</name>
</gene>
<comment type="function">
    <text evidence="1">One of the primary rRNA binding proteins. Required for association of the 30S and 50S subunits to form the 70S ribosome, for tRNA binding and peptide bond formation. It has been suggested to have peptidyltransferase activity; this is somewhat controversial. Makes several contacts with the 16S rRNA in the 70S ribosome.</text>
</comment>
<comment type="subunit">
    <text evidence="1">Part of the 50S ribosomal subunit. Forms a bridge to the 30S subunit in the 70S ribosome.</text>
</comment>
<comment type="similarity">
    <text evidence="1">Belongs to the universal ribosomal protein uL2 family.</text>
</comment>
<reference key="1">
    <citation type="journal article" date="2005" name="Infect. Immun.">
        <title>Comparative genomic analysis of Chlamydia trachomatis oculotropic and genitotropic strains.</title>
        <authorList>
            <person name="Carlson J.H."/>
            <person name="Porcella S.F."/>
            <person name="McClarty G."/>
            <person name="Caldwell H.D."/>
        </authorList>
    </citation>
    <scope>NUCLEOTIDE SEQUENCE [LARGE SCALE GENOMIC DNA]</scope>
    <source>
        <strain>ATCC VR-571B / DSM 19440 / HAR-13</strain>
    </source>
</reference>
<protein>
    <recommendedName>
        <fullName evidence="1">Large ribosomal subunit protein uL2</fullName>
    </recommendedName>
    <alternativeName>
        <fullName evidence="3">50S ribosomal protein L2</fullName>
    </alternativeName>
</protein>
<sequence length="284" mass="31473">MFKKFKPVTPGTRQLILPSFDELTTQGELKGSSSRRSVRPNKKLSFFKKSSGGRDNLGHISCRHRGGGVRRHYRVIDFKRNKDGIEAKVASVEYDPNRSAYIALLNYVDGEKRYILAPKGIKRGDRVISGEGSPFKTGCCMTLKSIPLGLSVHNVEMRPGSGGKLVRSAGLSAQIIAKTAGYVTLKMPSGEFRMLNEMCRATVGEVSNADHNLCVDGKAGRRRWKGIRPTVRGTAMNPVDHPHGGGEGRHNGYISQTPWGKVTKGLKTRDKRKSNKWIVKDRRK</sequence>
<accession>Q3KLH2</accession>